<dbReference type="EMBL" id="CP001252">
    <property type="protein sequence ID" value="ACK48508.1"/>
    <property type="molecule type" value="Genomic_DNA"/>
</dbReference>
<dbReference type="RefSeq" id="WP_006083579.1">
    <property type="nucleotide sequence ID" value="NC_011663.1"/>
</dbReference>
<dbReference type="SMR" id="B8EBI4"/>
<dbReference type="GeneID" id="94726207"/>
<dbReference type="KEGG" id="sbp:Sbal223_4035"/>
<dbReference type="HOGENOM" id="CLU_135723_6_2_6"/>
<dbReference type="Proteomes" id="UP000002507">
    <property type="component" value="Chromosome"/>
</dbReference>
<dbReference type="GO" id="GO:0005737">
    <property type="term" value="C:cytoplasm"/>
    <property type="evidence" value="ECO:0007669"/>
    <property type="project" value="UniProtKB-ARBA"/>
</dbReference>
<dbReference type="GO" id="GO:1990904">
    <property type="term" value="C:ribonucleoprotein complex"/>
    <property type="evidence" value="ECO:0007669"/>
    <property type="project" value="UniProtKB-KW"/>
</dbReference>
<dbReference type="GO" id="GO:0005840">
    <property type="term" value="C:ribosome"/>
    <property type="evidence" value="ECO:0007669"/>
    <property type="project" value="UniProtKB-KW"/>
</dbReference>
<dbReference type="GO" id="GO:0003735">
    <property type="term" value="F:structural constituent of ribosome"/>
    <property type="evidence" value="ECO:0007669"/>
    <property type="project" value="InterPro"/>
</dbReference>
<dbReference type="GO" id="GO:0006412">
    <property type="term" value="P:translation"/>
    <property type="evidence" value="ECO:0007669"/>
    <property type="project" value="UniProtKB-UniRule"/>
</dbReference>
<dbReference type="HAMAP" id="MF_00251">
    <property type="entry name" value="Ribosomal_bL36"/>
    <property type="match status" value="1"/>
</dbReference>
<dbReference type="InterPro" id="IPR000473">
    <property type="entry name" value="Ribosomal_bL36"/>
</dbReference>
<dbReference type="InterPro" id="IPR035977">
    <property type="entry name" value="Ribosomal_bL36_sp"/>
</dbReference>
<dbReference type="NCBIfam" id="TIGR01022">
    <property type="entry name" value="rpmJ_bact"/>
    <property type="match status" value="1"/>
</dbReference>
<dbReference type="PANTHER" id="PTHR42888">
    <property type="entry name" value="50S RIBOSOMAL PROTEIN L36, CHLOROPLASTIC"/>
    <property type="match status" value="1"/>
</dbReference>
<dbReference type="PANTHER" id="PTHR42888:SF1">
    <property type="entry name" value="LARGE RIBOSOMAL SUBUNIT PROTEIN BL36C"/>
    <property type="match status" value="1"/>
</dbReference>
<dbReference type="Pfam" id="PF00444">
    <property type="entry name" value="Ribosomal_L36"/>
    <property type="match status" value="1"/>
</dbReference>
<dbReference type="SUPFAM" id="SSF57840">
    <property type="entry name" value="Ribosomal protein L36"/>
    <property type="match status" value="1"/>
</dbReference>
<dbReference type="PROSITE" id="PS00828">
    <property type="entry name" value="RIBOSOMAL_L36"/>
    <property type="match status" value="1"/>
</dbReference>
<sequence>MKVRASVKKICRNCKIVKRSGVVRVICVEPKHKQRQG</sequence>
<gene>
    <name evidence="1" type="primary">rpmJ</name>
    <name type="ordered locus">Sbal223_4035</name>
</gene>
<organism>
    <name type="scientific">Shewanella baltica (strain OS223)</name>
    <dbReference type="NCBI Taxonomy" id="407976"/>
    <lineage>
        <taxon>Bacteria</taxon>
        <taxon>Pseudomonadati</taxon>
        <taxon>Pseudomonadota</taxon>
        <taxon>Gammaproteobacteria</taxon>
        <taxon>Alteromonadales</taxon>
        <taxon>Shewanellaceae</taxon>
        <taxon>Shewanella</taxon>
    </lineage>
</organism>
<proteinExistence type="inferred from homology"/>
<reference key="1">
    <citation type="submission" date="2008-12" db="EMBL/GenBank/DDBJ databases">
        <title>Complete sequence of chromosome of Shewanella baltica OS223.</title>
        <authorList>
            <consortium name="US DOE Joint Genome Institute"/>
            <person name="Lucas S."/>
            <person name="Copeland A."/>
            <person name="Lapidus A."/>
            <person name="Glavina del Rio T."/>
            <person name="Dalin E."/>
            <person name="Tice H."/>
            <person name="Bruce D."/>
            <person name="Goodwin L."/>
            <person name="Pitluck S."/>
            <person name="Chertkov O."/>
            <person name="Meincke L."/>
            <person name="Brettin T."/>
            <person name="Detter J.C."/>
            <person name="Han C."/>
            <person name="Kuske C.R."/>
            <person name="Larimer F."/>
            <person name="Land M."/>
            <person name="Hauser L."/>
            <person name="Kyrpides N."/>
            <person name="Ovchinnikova G."/>
            <person name="Brettar I."/>
            <person name="Rodrigues J."/>
            <person name="Konstantinidis K."/>
            <person name="Tiedje J."/>
        </authorList>
    </citation>
    <scope>NUCLEOTIDE SEQUENCE [LARGE SCALE GENOMIC DNA]</scope>
    <source>
        <strain>OS223</strain>
    </source>
</reference>
<feature type="chain" id="PRO_1000196207" description="Large ribosomal subunit protein bL36">
    <location>
        <begin position="1"/>
        <end position="37"/>
    </location>
</feature>
<name>RL36_SHEB2</name>
<evidence type="ECO:0000255" key="1">
    <source>
        <dbReference type="HAMAP-Rule" id="MF_00251"/>
    </source>
</evidence>
<evidence type="ECO:0000305" key="2"/>
<protein>
    <recommendedName>
        <fullName evidence="1">Large ribosomal subunit protein bL36</fullName>
    </recommendedName>
    <alternativeName>
        <fullName evidence="2">50S ribosomal protein L36</fullName>
    </alternativeName>
</protein>
<keyword id="KW-0687">Ribonucleoprotein</keyword>
<keyword id="KW-0689">Ribosomal protein</keyword>
<accession>B8EBI4</accession>
<comment type="similarity">
    <text evidence="1">Belongs to the bacterial ribosomal protein bL36 family.</text>
</comment>